<name>VPB41_MYCTU</name>
<sequence length="95" mass="10454">MKTTLDLPDELMRAIKVRAAQQGRKMKDVVTELLRSGLSQTHSGAPIPTPRRVQLPLVHCGGAATREQEMTPERVAAALLDQEAQWWSGHDDAAL</sequence>
<proteinExistence type="evidence at protein level"/>
<protein>
    <recommendedName>
        <fullName>Antitoxin VapB41</fullName>
    </recommendedName>
</protein>
<dbReference type="EMBL" id="AL123456">
    <property type="protein sequence ID" value="CCP45398.1"/>
    <property type="molecule type" value="Genomic_DNA"/>
</dbReference>
<dbReference type="RefSeq" id="WP_003413456.1">
    <property type="nucleotide sequence ID" value="NZ_NVQJ01000023.1"/>
</dbReference>
<dbReference type="RefSeq" id="YP_177673.1">
    <property type="nucleotide sequence ID" value="NC_000962.3"/>
</dbReference>
<dbReference type="SMR" id="P9WJ21"/>
<dbReference type="STRING" id="83332.Rv2601A"/>
<dbReference type="PaxDb" id="83332-Rv2601A"/>
<dbReference type="DNASU" id="3205108"/>
<dbReference type="GeneID" id="3205108"/>
<dbReference type="KEGG" id="mtu:Rv2601A"/>
<dbReference type="KEGG" id="mtv:RVBD_2601A"/>
<dbReference type="TubercuList" id="Rv2601A"/>
<dbReference type="eggNOG" id="ENOG502ZXWY">
    <property type="taxonomic scope" value="Bacteria"/>
</dbReference>
<dbReference type="InParanoid" id="P9WJ21"/>
<dbReference type="OrthoDB" id="4557122at2"/>
<dbReference type="Proteomes" id="UP000001584">
    <property type="component" value="Chromosome"/>
</dbReference>
<dbReference type="GO" id="GO:0045927">
    <property type="term" value="P:positive regulation of growth"/>
    <property type="evidence" value="ECO:0000315"/>
    <property type="project" value="MTBBASE"/>
</dbReference>
<dbReference type="GO" id="GO:0006355">
    <property type="term" value="P:regulation of DNA-templated transcription"/>
    <property type="evidence" value="ECO:0007669"/>
    <property type="project" value="InterPro"/>
</dbReference>
<dbReference type="Gene3D" id="1.10.1220.10">
    <property type="entry name" value="Met repressor-like"/>
    <property type="match status" value="1"/>
</dbReference>
<dbReference type="InterPro" id="IPR013321">
    <property type="entry name" value="Arc_rbn_hlx_hlx"/>
</dbReference>
<dbReference type="InterPro" id="IPR010985">
    <property type="entry name" value="Ribbon_hlx_hlx"/>
</dbReference>
<dbReference type="SUPFAM" id="SSF47598">
    <property type="entry name" value="Ribbon-helix-helix"/>
    <property type="match status" value="1"/>
</dbReference>
<comment type="function">
    <text evidence="1">Antitoxin component of a type II toxin-antitoxin (TA) system. Upon expression in M.smegmatis neutralizes the effect of cognate toxin VapC41.</text>
</comment>
<organism>
    <name type="scientific">Mycobacterium tuberculosis (strain ATCC 25618 / H37Rv)</name>
    <dbReference type="NCBI Taxonomy" id="83332"/>
    <lineage>
        <taxon>Bacteria</taxon>
        <taxon>Bacillati</taxon>
        <taxon>Actinomycetota</taxon>
        <taxon>Actinomycetes</taxon>
        <taxon>Mycobacteriales</taxon>
        <taxon>Mycobacteriaceae</taxon>
        <taxon>Mycobacterium</taxon>
        <taxon>Mycobacterium tuberculosis complex</taxon>
    </lineage>
</organism>
<accession>P9WJ21</accession>
<accession>L0TCV8</accession>
<accession>Q79FC7</accession>
<accession>Q8VJF3</accession>
<evidence type="ECO:0000269" key="1">
    <source>
    </source>
</evidence>
<gene>
    <name type="primary">vapB41</name>
    <name type="ordered locus">Rv2601A</name>
</gene>
<keyword id="KW-1185">Reference proteome</keyword>
<keyword id="KW-1277">Toxin-antitoxin system</keyword>
<reference key="1">
    <citation type="journal article" date="2002" name="Microbiology">
        <title>Re-annotation of the genome sequence of Mycobacterium tuberculosis H37Rv.</title>
        <authorList>
            <person name="Camus J.-C."/>
            <person name="Pryor M.J."/>
            <person name="Medigue C."/>
            <person name="Cole S.T."/>
        </authorList>
    </citation>
    <scope>IDENTIFICATION</scope>
    <source>
        <strain>ATCC 25618 / H37Rv</strain>
    </source>
</reference>
<reference key="2">
    <citation type="journal article" date="1998" name="Nature">
        <title>Deciphering the biology of Mycobacterium tuberculosis from the complete genome sequence.</title>
        <authorList>
            <person name="Cole S.T."/>
            <person name="Brosch R."/>
            <person name="Parkhill J."/>
            <person name="Garnier T."/>
            <person name="Churcher C.M."/>
            <person name="Harris D.E."/>
            <person name="Gordon S.V."/>
            <person name="Eiglmeier K."/>
            <person name="Gas S."/>
            <person name="Barry C.E. III"/>
            <person name="Tekaia F."/>
            <person name="Badcock K."/>
            <person name="Basham D."/>
            <person name="Brown D."/>
            <person name="Chillingworth T."/>
            <person name="Connor R."/>
            <person name="Davies R.M."/>
            <person name="Devlin K."/>
            <person name="Feltwell T."/>
            <person name="Gentles S."/>
            <person name="Hamlin N."/>
            <person name="Holroyd S."/>
            <person name="Hornsby T."/>
            <person name="Jagels K."/>
            <person name="Krogh A."/>
            <person name="McLean J."/>
            <person name="Moule S."/>
            <person name="Murphy L.D."/>
            <person name="Oliver S."/>
            <person name="Osborne J."/>
            <person name="Quail M.A."/>
            <person name="Rajandream M.A."/>
            <person name="Rogers J."/>
            <person name="Rutter S."/>
            <person name="Seeger K."/>
            <person name="Skelton S."/>
            <person name="Squares S."/>
            <person name="Squares R."/>
            <person name="Sulston J.E."/>
            <person name="Taylor K."/>
            <person name="Whitehead S."/>
            <person name="Barrell B.G."/>
        </authorList>
    </citation>
    <scope>NUCLEOTIDE SEQUENCE [LARGE SCALE GENOMIC DNA]</scope>
    <source>
        <strain>ATCC 25618 / H37Rv</strain>
    </source>
</reference>
<reference key="3">
    <citation type="journal article" date="2009" name="PLoS Genet.">
        <title>Comprehensive functional analysis of Mycobacterium tuberculosis toxin-antitoxin systems: implications for pathogenesis, stress responses, and evolution.</title>
        <authorList>
            <person name="Ramage H.R."/>
            <person name="Connolly L.E."/>
            <person name="Cox J.S."/>
        </authorList>
    </citation>
    <scope>EXPRESSION IN M.SMEGMATIS</scope>
    <scope>FUNCTION AS AN ANTITOXIN</scope>
    <source>
        <strain>ATCC 35801 / TMC 107 / Erdman</strain>
    </source>
</reference>
<feature type="chain" id="PRO_0000408082" description="Antitoxin VapB41">
    <location>
        <begin position="1"/>
        <end position="95"/>
    </location>
</feature>